<accession>P0C243</accession>
<accession>Q7AJQ0</accession>
<feature type="chain" id="PRO_0000262315" description="Uncharacterized protein YubJ">
    <location>
        <begin position="1"/>
        <end position="140"/>
    </location>
</feature>
<protein>
    <recommendedName>
        <fullName>Uncharacterized protein YubJ</fullName>
    </recommendedName>
</protein>
<proteinExistence type="predicted"/>
<reference key="1">
    <citation type="journal article" date="1999" name="Plasmid">
        <title>Nucleotide sequence of the F plasmid leading region.</title>
        <authorList>
            <person name="Manwaring N.P."/>
            <person name="Skurray R.A."/>
            <person name="Firth N."/>
        </authorList>
    </citation>
    <scope>NUCLEOTIDE SEQUENCE [GENOMIC DNA]</scope>
</reference>
<reference key="2">
    <citation type="submission" date="2000-04" db="EMBL/GenBank/DDBJ databases">
        <title>Complete nucleotide sequence of the F plasmid: its implications for organization and diversification of plasmid genomes.</title>
        <authorList>
            <person name="Shimizu H."/>
            <person name="Saitoh Y."/>
            <person name="Suda Y."/>
            <person name="Uehara K."/>
            <person name="Sampei G."/>
            <person name="Mizobuchi K."/>
        </authorList>
    </citation>
    <scope>NUCLEOTIDE SEQUENCE [LARGE SCALE GENOMIC DNA]</scope>
    <source>
        <strain>K12 / CR63</strain>
    </source>
</reference>
<sequence length="140" mass="15695">MYCTVKEIIRDVLDTDVPDSECVFAVVLTRGDVRHIAQDWNLSDDELETVMQRLDDAFEYGADVSIVHDVVRELMEEKRASRQVTVPAVMLEKVMALAGSEMKRLYAVGSENGGDGDAFVREEREAMDVVLQALDGEHMS</sequence>
<name>YUBJ_ECOLI</name>
<keyword id="KW-0614">Plasmid</keyword>
<geneLocation type="plasmid">
    <name>F</name>
</geneLocation>
<organism>
    <name type="scientific">Escherichia coli (strain K12)</name>
    <dbReference type="NCBI Taxonomy" id="83333"/>
    <lineage>
        <taxon>Bacteria</taxon>
        <taxon>Pseudomonadati</taxon>
        <taxon>Pseudomonadota</taxon>
        <taxon>Gammaproteobacteria</taxon>
        <taxon>Enterobacterales</taxon>
        <taxon>Enterobacteriaceae</taxon>
        <taxon>Escherichia</taxon>
    </lineage>
</organism>
<gene>
    <name type="primary">yubJ</name>
    <name type="synonym">yfhA</name>
    <name type="ordered locus">ECOK12F058</name>
</gene>
<dbReference type="EMBL" id="AF106329">
    <property type="protein sequence ID" value="AAD47184.1"/>
    <property type="molecule type" value="Genomic_DNA"/>
</dbReference>
<dbReference type="EMBL" id="AP001918">
    <property type="protein sequence ID" value="BAA97928.1"/>
    <property type="molecule type" value="Genomic_DNA"/>
</dbReference>
<dbReference type="RefSeq" id="NP_061437.1">
    <property type="nucleotide sequence ID" value="NC_002483.1"/>
</dbReference>
<dbReference type="RefSeq" id="WP_000271685.1">
    <property type="nucleotide sequence ID" value="NZ_SSUW01000063.1"/>
</dbReference>
<dbReference type="RefSeq" id="YP_001294722.1">
    <property type="nucleotide sequence ID" value="NC_009602.1"/>
</dbReference>
<dbReference type="SMR" id="P0C243"/>
<dbReference type="KEGG" id="ecoc:C3026_24385"/>
<dbReference type="PRO" id="PR:P0C243"/>